<feature type="chain" id="PRO_0000138777" description="Large ribosomal subunit protein eL40">
    <location>
        <begin position="1"/>
        <end position="49"/>
    </location>
</feature>
<keyword id="KW-1185">Reference proteome</keyword>
<keyword id="KW-0687">Ribonucleoprotein</keyword>
<keyword id="KW-0689">Ribosomal protein</keyword>
<proteinExistence type="inferred from homology"/>
<accession>O28842</accession>
<evidence type="ECO:0000255" key="1">
    <source>
        <dbReference type="HAMAP-Rule" id="MF_00788"/>
    </source>
</evidence>
<evidence type="ECO:0000305" key="2"/>
<name>RL40_ARCFU</name>
<gene>
    <name evidence="1" type="primary">rpl40e</name>
    <name type="ordered locus">AF_1430</name>
</gene>
<dbReference type="EMBL" id="AE000782">
    <property type="protein sequence ID" value="AAB89814.1"/>
    <property type="molecule type" value="Genomic_DNA"/>
</dbReference>
<dbReference type="PIR" id="E69428">
    <property type="entry name" value="E69428"/>
</dbReference>
<dbReference type="RefSeq" id="WP_010878927.1">
    <property type="nucleotide sequence ID" value="NC_000917.1"/>
</dbReference>
<dbReference type="SMR" id="O28842"/>
<dbReference type="STRING" id="224325.AF_1430"/>
<dbReference type="PaxDb" id="224325-AF_1430"/>
<dbReference type="EnsemblBacteria" id="AAB89814">
    <property type="protein sequence ID" value="AAB89814"/>
    <property type="gene ID" value="AF_1430"/>
</dbReference>
<dbReference type="KEGG" id="afu:AF_1430"/>
<dbReference type="eggNOG" id="arCOG04049">
    <property type="taxonomic scope" value="Archaea"/>
</dbReference>
<dbReference type="HOGENOM" id="CLU_205640_0_0_2"/>
<dbReference type="OrthoDB" id="45138at2157"/>
<dbReference type="PhylomeDB" id="O28842"/>
<dbReference type="Proteomes" id="UP000002199">
    <property type="component" value="Chromosome"/>
</dbReference>
<dbReference type="GO" id="GO:1990904">
    <property type="term" value="C:ribonucleoprotein complex"/>
    <property type="evidence" value="ECO:0007669"/>
    <property type="project" value="UniProtKB-KW"/>
</dbReference>
<dbReference type="GO" id="GO:0005840">
    <property type="term" value="C:ribosome"/>
    <property type="evidence" value="ECO:0007669"/>
    <property type="project" value="UniProtKB-KW"/>
</dbReference>
<dbReference type="GO" id="GO:0003735">
    <property type="term" value="F:structural constituent of ribosome"/>
    <property type="evidence" value="ECO:0007669"/>
    <property type="project" value="InterPro"/>
</dbReference>
<dbReference type="GO" id="GO:0006412">
    <property type="term" value="P:translation"/>
    <property type="evidence" value="ECO:0007669"/>
    <property type="project" value="UniProtKB-UniRule"/>
</dbReference>
<dbReference type="Gene3D" id="4.10.1060.50">
    <property type="match status" value="1"/>
</dbReference>
<dbReference type="HAMAP" id="MF_00788">
    <property type="entry name" value="Ribosomal_eL40"/>
    <property type="match status" value="1"/>
</dbReference>
<dbReference type="InterPro" id="IPR023657">
    <property type="entry name" value="Ribosomal_eL40_arc"/>
</dbReference>
<dbReference type="InterPro" id="IPR001975">
    <property type="entry name" value="Ribosomal_eL40_dom"/>
</dbReference>
<dbReference type="InterPro" id="IPR038587">
    <property type="entry name" value="Ribosomal_eL40_sf"/>
</dbReference>
<dbReference type="InterPro" id="IPR011332">
    <property type="entry name" value="Ribosomal_zn-bd"/>
</dbReference>
<dbReference type="NCBIfam" id="NF003161">
    <property type="entry name" value="PRK04136.1"/>
    <property type="match status" value="1"/>
</dbReference>
<dbReference type="PANTHER" id="PTHR39649">
    <property type="entry name" value="50S RIBOSOMAL PROTEIN L40E"/>
    <property type="match status" value="1"/>
</dbReference>
<dbReference type="PANTHER" id="PTHR39649:SF1">
    <property type="entry name" value="LARGE RIBOSOMAL SUBUNIT PROTEIN EL40"/>
    <property type="match status" value="1"/>
</dbReference>
<dbReference type="SMART" id="SM01377">
    <property type="entry name" value="Ribosomal_L40e"/>
    <property type="match status" value="1"/>
</dbReference>
<dbReference type="SUPFAM" id="SSF57829">
    <property type="entry name" value="Zn-binding ribosomal proteins"/>
    <property type="match status" value="1"/>
</dbReference>
<reference key="1">
    <citation type="journal article" date="1997" name="Nature">
        <title>The complete genome sequence of the hyperthermophilic, sulphate-reducing archaeon Archaeoglobus fulgidus.</title>
        <authorList>
            <person name="Klenk H.-P."/>
            <person name="Clayton R.A."/>
            <person name="Tomb J.-F."/>
            <person name="White O."/>
            <person name="Nelson K.E."/>
            <person name="Ketchum K.A."/>
            <person name="Dodson R.J."/>
            <person name="Gwinn M.L."/>
            <person name="Hickey E.K."/>
            <person name="Peterson J.D."/>
            <person name="Richardson D.L."/>
            <person name="Kerlavage A.R."/>
            <person name="Graham D.E."/>
            <person name="Kyrpides N.C."/>
            <person name="Fleischmann R.D."/>
            <person name="Quackenbush J."/>
            <person name="Lee N.H."/>
            <person name="Sutton G.G."/>
            <person name="Gill S.R."/>
            <person name="Kirkness E.F."/>
            <person name="Dougherty B.A."/>
            <person name="McKenney K."/>
            <person name="Adams M.D."/>
            <person name="Loftus B.J."/>
            <person name="Peterson S.N."/>
            <person name="Reich C.I."/>
            <person name="McNeil L.K."/>
            <person name="Badger J.H."/>
            <person name="Glodek A."/>
            <person name="Zhou L."/>
            <person name="Overbeek R."/>
            <person name="Gocayne J.D."/>
            <person name="Weidman J.F."/>
            <person name="McDonald L.A."/>
            <person name="Utterback T.R."/>
            <person name="Cotton M.D."/>
            <person name="Spriggs T."/>
            <person name="Artiach P."/>
            <person name="Kaine B.P."/>
            <person name="Sykes S.M."/>
            <person name="Sadow P.W."/>
            <person name="D'Andrea K.P."/>
            <person name="Bowman C."/>
            <person name="Fujii C."/>
            <person name="Garland S.A."/>
            <person name="Mason T.M."/>
            <person name="Olsen G.J."/>
            <person name="Fraser C.M."/>
            <person name="Smith H.O."/>
            <person name="Woese C.R."/>
            <person name="Venter J.C."/>
        </authorList>
    </citation>
    <scope>NUCLEOTIDE SEQUENCE [LARGE SCALE GENOMIC DNA]</scope>
    <source>
        <strain>ATCC 49558 / DSM 4304 / JCM 9628 / NBRC 100126 / VC-16</strain>
    </source>
</reference>
<organism>
    <name type="scientific">Archaeoglobus fulgidus (strain ATCC 49558 / DSM 4304 / JCM 9628 / NBRC 100126 / VC-16)</name>
    <dbReference type="NCBI Taxonomy" id="224325"/>
    <lineage>
        <taxon>Archaea</taxon>
        <taxon>Methanobacteriati</taxon>
        <taxon>Methanobacteriota</taxon>
        <taxon>Archaeoglobi</taxon>
        <taxon>Archaeoglobales</taxon>
        <taxon>Archaeoglobaceae</taxon>
        <taxon>Archaeoglobus</taxon>
    </lineage>
</organism>
<comment type="similarity">
    <text evidence="1">Belongs to the eukaryotic ribosomal protein eL40 family.</text>
</comment>
<protein>
    <recommendedName>
        <fullName evidence="1">Large ribosomal subunit protein eL40</fullName>
    </recommendedName>
    <alternativeName>
        <fullName evidence="2">50S ribosomal protein L40e</fullName>
    </alternativeName>
</protein>
<sequence>MARFPEAEARLFNVKICMRCNARNPMKARVCRKCGYKGLRPKSKERKGR</sequence>